<organism>
    <name type="scientific">Saccharomyces cerevisiae (strain YJM789)</name>
    <name type="common">Baker's yeast</name>
    <dbReference type="NCBI Taxonomy" id="307796"/>
    <lineage>
        <taxon>Eukaryota</taxon>
        <taxon>Fungi</taxon>
        <taxon>Dikarya</taxon>
        <taxon>Ascomycota</taxon>
        <taxon>Saccharomycotina</taxon>
        <taxon>Saccharomycetes</taxon>
        <taxon>Saccharomycetales</taxon>
        <taxon>Saccharomycetaceae</taxon>
        <taxon>Saccharomyces</taxon>
    </lineage>
</organism>
<protein>
    <recommendedName>
        <fullName>DNA repair and recombination protein RDH54</fullName>
    </recommendedName>
    <alternativeName>
        <fullName>RAD homolog 54</fullName>
    </alternativeName>
    <alternativeName>
        <fullName>Recombination factor TID1</fullName>
    </alternativeName>
    <alternativeName>
        <fullName>Two hybrid interaction with DMC1 protein 1</fullName>
    </alternativeName>
    <domain>
        <recommendedName>
            <fullName>DNA topoisomerase</fullName>
            <ecNumber>5.99.1.-</ecNumber>
        </recommendedName>
    </domain>
    <domain>
        <recommendedName>
            <fullName>Putative helicase</fullName>
            <ecNumber>3.6.4.12</ecNumber>
        </recommendedName>
    </domain>
</protein>
<comment type="function">
    <text evidence="1">Involved in the recombinational repair of double-strand breaks (DSB) in DNA during mitosis and meiosis. Has DNA dependent ATPase activity. Promotes D-loop (displacement loop) formation with RAD51 recombinase. Modifies the topology of double-stranded DNA during the D-loop reaction to facilitate the invasion of the homologous duplex molecule by the initiating single-stranded DNA substrate. Required for adaptation from G2/M checkpoint arrest induced by a double strand break, by participating in monitoring the extent of single-stranded DNA produced by resection of DNA ends. This role is distinct from its roles in recombination. Promotes colocalization of RAD51 and DMC1 during meiotic recombination. Involved in crossover interference (By similarity).</text>
</comment>
<comment type="catalytic activity">
    <reaction>
        <text>ATP + H2O = ADP + phosphate + H(+)</text>
        <dbReference type="Rhea" id="RHEA:13065"/>
        <dbReference type="ChEBI" id="CHEBI:15377"/>
        <dbReference type="ChEBI" id="CHEBI:15378"/>
        <dbReference type="ChEBI" id="CHEBI:30616"/>
        <dbReference type="ChEBI" id="CHEBI:43474"/>
        <dbReference type="ChEBI" id="CHEBI:456216"/>
        <dbReference type="EC" id="3.6.4.12"/>
    </reaction>
</comment>
<comment type="subunit">
    <text evidence="1">Interacts with RAD51 and DMC1.</text>
</comment>
<comment type="subcellular location">
    <subcellularLocation>
        <location evidence="1">Nucleus</location>
    </subcellularLocation>
</comment>
<comment type="similarity">
    <text evidence="6">Belongs to the SNF2/RAD54 helicase family.</text>
</comment>
<accession>A6ZL17</accession>
<gene>
    <name type="primary">RDH54</name>
    <name type="synonym">TID1</name>
    <name type="ORF">SCY_0287</name>
</gene>
<feature type="chain" id="PRO_0000393313" description="DNA repair and recombination protein RDH54">
    <location>
        <begin position="1"/>
        <end position="924"/>
    </location>
</feature>
<feature type="domain" description="Helicase ATP-binding" evidence="3">
    <location>
        <begin position="299"/>
        <end position="487"/>
    </location>
</feature>
<feature type="domain" description="Helicase C-terminal" evidence="4">
    <location>
        <begin position="631"/>
        <end position="790"/>
    </location>
</feature>
<feature type="region of interest" description="Disordered" evidence="5">
    <location>
        <begin position="1"/>
        <end position="21"/>
    </location>
</feature>
<feature type="region of interest" description="Disordered" evidence="5">
    <location>
        <begin position="155"/>
        <end position="183"/>
    </location>
</feature>
<feature type="short sequence motif" description="DEGH box">
    <location>
        <begin position="472"/>
        <end position="475"/>
    </location>
</feature>
<feature type="compositionally biased region" description="Basic and acidic residues" evidence="5">
    <location>
        <begin position="1"/>
        <end position="10"/>
    </location>
</feature>
<feature type="compositionally biased region" description="Low complexity" evidence="5">
    <location>
        <begin position="168"/>
        <end position="178"/>
    </location>
</feature>
<feature type="binding site" evidence="3">
    <location>
        <begin position="346"/>
        <end position="353"/>
    </location>
    <ligand>
        <name>ATP</name>
        <dbReference type="ChEBI" id="CHEBI:30616"/>
    </ligand>
</feature>
<feature type="cross-link" description="Glycyl lysine isopeptide (Lys-Gly) (interchain with G-Cter in ubiquitin)" evidence="2">
    <location>
        <position position="615"/>
    </location>
</feature>
<reference key="1">
    <citation type="journal article" date="2007" name="Proc. Natl. Acad. Sci. U.S.A.">
        <title>Genome sequencing and comparative analysis of Saccharomyces cerevisiae strain YJM789.</title>
        <authorList>
            <person name="Wei W."/>
            <person name="McCusker J.H."/>
            <person name="Hyman R.W."/>
            <person name="Jones T."/>
            <person name="Ning Y."/>
            <person name="Cao Z."/>
            <person name="Gu Z."/>
            <person name="Bruno D."/>
            <person name="Miranda M."/>
            <person name="Nguyen M."/>
            <person name="Wilhelmy J."/>
            <person name="Komp C."/>
            <person name="Tamse R."/>
            <person name="Wang X."/>
            <person name="Jia P."/>
            <person name="Luedi P."/>
            <person name="Oefner P.J."/>
            <person name="David L."/>
            <person name="Dietrich F.S."/>
            <person name="Li Y."/>
            <person name="Davis R.W."/>
            <person name="Steinmetz L.M."/>
        </authorList>
    </citation>
    <scope>NUCLEOTIDE SEQUENCE [LARGE SCALE GENOMIC DNA]</scope>
    <source>
        <strain>YJM789</strain>
    </source>
</reference>
<keyword id="KW-0067">ATP-binding</keyword>
<keyword id="KW-0227">DNA damage</keyword>
<keyword id="KW-0233">DNA recombination</keyword>
<keyword id="KW-0234">DNA repair</keyword>
<keyword id="KW-0238">DNA-binding</keyword>
<keyword id="KW-0347">Helicase</keyword>
<keyword id="KW-0378">Hydrolase</keyword>
<keyword id="KW-0413">Isomerase</keyword>
<keyword id="KW-1017">Isopeptide bond</keyword>
<keyword id="KW-0469">Meiosis</keyword>
<keyword id="KW-0547">Nucleotide-binding</keyword>
<keyword id="KW-0539">Nucleus</keyword>
<keyword id="KW-0799">Topoisomerase</keyword>
<keyword id="KW-0832">Ubl conjugation</keyword>
<dbReference type="EC" id="5.99.1.-"/>
<dbReference type="EC" id="3.6.4.12"/>
<dbReference type="EMBL" id="AAFW02000011">
    <property type="protein sequence ID" value="EDN64686.1"/>
    <property type="molecule type" value="Genomic_DNA"/>
</dbReference>
<dbReference type="SMR" id="A6ZL17"/>
<dbReference type="HOGENOM" id="CLU_000315_10_1_1"/>
<dbReference type="Proteomes" id="UP000007060">
    <property type="component" value="Unassembled WGS sequence"/>
</dbReference>
<dbReference type="GO" id="GO:0005634">
    <property type="term" value="C:nucleus"/>
    <property type="evidence" value="ECO:0007669"/>
    <property type="project" value="UniProtKB-SubCell"/>
</dbReference>
<dbReference type="GO" id="GO:0005524">
    <property type="term" value="F:ATP binding"/>
    <property type="evidence" value="ECO:0007669"/>
    <property type="project" value="UniProtKB-KW"/>
</dbReference>
<dbReference type="GO" id="GO:0016887">
    <property type="term" value="F:ATP hydrolysis activity"/>
    <property type="evidence" value="ECO:0007669"/>
    <property type="project" value="RHEA"/>
</dbReference>
<dbReference type="GO" id="GO:0003677">
    <property type="term" value="F:DNA binding"/>
    <property type="evidence" value="ECO:0007669"/>
    <property type="project" value="UniProtKB-KW"/>
</dbReference>
<dbReference type="GO" id="GO:0003916">
    <property type="term" value="F:DNA topoisomerase activity"/>
    <property type="evidence" value="ECO:0007669"/>
    <property type="project" value="UniProtKB-KW"/>
</dbReference>
<dbReference type="GO" id="GO:0015616">
    <property type="term" value="F:DNA translocase activity"/>
    <property type="evidence" value="ECO:0007669"/>
    <property type="project" value="TreeGrafter"/>
</dbReference>
<dbReference type="GO" id="GO:0004386">
    <property type="term" value="F:helicase activity"/>
    <property type="evidence" value="ECO:0007669"/>
    <property type="project" value="UniProtKB-KW"/>
</dbReference>
<dbReference type="GO" id="GO:0000724">
    <property type="term" value="P:double-strand break repair via homologous recombination"/>
    <property type="evidence" value="ECO:0007669"/>
    <property type="project" value="TreeGrafter"/>
</dbReference>
<dbReference type="GO" id="GO:0007131">
    <property type="term" value="P:reciprocal meiotic recombination"/>
    <property type="evidence" value="ECO:0007669"/>
    <property type="project" value="TreeGrafter"/>
</dbReference>
<dbReference type="CDD" id="cd18004">
    <property type="entry name" value="DEXHc_RAD54"/>
    <property type="match status" value="1"/>
</dbReference>
<dbReference type="CDD" id="cd18793">
    <property type="entry name" value="SF2_C_SNF"/>
    <property type="match status" value="1"/>
</dbReference>
<dbReference type="FunFam" id="3.40.50.10810:FF:000058">
    <property type="entry name" value="RDH54p DNA-dependent ATPase"/>
    <property type="match status" value="1"/>
</dbReference>
<dbReference type="Gene3D" id="3.40.50.300">
    <property type="entry name" value="P-loop containing nucleotide triphosphate hydrolases"/>
    <property type="match status" value="1"/>
</dbReference>
<dbReference type="Gene3D" id="1.20.120.850">
    <property type="entry name" value="SWI2/SNF2 ATPases, N-terminal domain"/>
    <property type="match status" value="1"/>
</dbReference>
<dbReference type="Gene3D" id="3.40.50.10810">
    <property type="entry name" value="Tandem AAA-ATPase domain"/>
    <property type="match status" value="1"/>
</dbReference>
<dbReference type="InterPro" id="IPR014001">
    <property type="entry name" value="Helicase_ATP-bd"/>
</dbReference>
<dbReference type="InterPro" id="IPR001650">
    <property type="entry name" value="Helicase_C-like"/>
</dbReference>
<dbReference type="InterPro" id="IPR027417">
    <property type="entry name" value="P-loop_NTPase"/>
</dbReference>
<dbReference type="InterPro" id="IPR038718">
    <property type="entry name" value="SNF2-like_sf"/>
</dbReference>
<dbReference type="InterPro" id="IPR049730">
    <property type="entry name" value="SNF2/RAD54-like_C"/>
</dbReference>
<dbReference type="InterPro" id="IPR000330">
    <property type="entry name" value="SNF2_N"/>
</dbReference>
<dbReference type="InterPro" id="IPR050496">
    <property type="entry name" value="SNF2_RAD54_helicase_repair"/>
</dbReference>
<dbReference type="PANTHER" id="PTHR45629:SF7">
    <property type="entry name" value="DNA EXCISION REPAIR PROTEIN ERCC-6-RELATED"/>
    <property type="match status" value="1"/>
</dbReference>
<dbReference type="PANTHER" id="PTHR45629">
    <property type="entry name" value="SNF2/RAD54 FAMILY MEMBER"/>
    <property type="match status" value="1"/>
</dbReference>
<dbReference type="Pfam" id="PF00271">
    <property type="entry name" value="Helicase_C"/>
    <property type="match status" value="1"/>
</dbReference>
<dbReference type="Pfam" id="PF00176">
    <property type="entry name" value="SNF2-rel_dom"/>
    <property type="match status" value="1"/>
</dbReference>
<dbReference type="SMART" id="SM00487">
    <property type="entry name" value="DEXDc"/>
    <property type="match status" value="1"/>
</dbReference>
<dbReference type="SMART" id="SM00490">
    <property type="entry name" value="HELICc"/>
    <property type="match status" value="1"/>
</dbReference>
<dbReference type="SUPFAM" id="SSF52540">
    <property type="entry name" value="P-loop containing nucleoside triphosphate hydrolases"/>
    <property type="match status" value="2"/>
</dbReference>
<dbReference type="PROSITE" id="PS51192">
    <property type="entry name" value="HELICASE_ATP_BIND_1"/>
    <property type="match status" value="1"/>
</dbReference>
<dbReference type="PROSITE" id="PS51194">
    <property type="entry name" value="HELICASE_CTER"/>
    <property type="match status" value="1"/>
</dbReference>
<proteinExistence type="inferred from homology"/>
<evidence type="ECO:0000250" key="1"/>
<evidence type="ECO:0000250" key="2">
    <source>
        <dbReference type="UniProtKB" id="P38086"/>
    </source>
</evidence>
<evidence type="ECO:0000255" key="3">
    <source>
        <dbReference type="PROSITE-ProRule" id="PRU00541"/>
    </source>
</evidence>
<evidence type="ECO:0000255" key="4">
    <source>
        <dbReference type="PROSITE-ProRule" id="PRU00542"/>
    </source>
</evidence>
<evidence type="ECO:0000256" key="5">
    <source>
        <dbReference type="SAM" id="MobiDB-lite"/>
    </source>
</evidence>
<evidence type="ECO:0000305" key="6"/>
<name>RDH54_YEAS7</name>
<sequence>MQIPKYENKPFKPPRRVGSNKYTQLKPTATAVTTAPISKAKVTVNLKRSISAGPTLNLAKKPNNLSSNENTRYFTIMYRKPTTKKHKTWSGDGYATLKASSDKLCFYNEAGKFLGSSMLPSDSDSLFETLFKAGSNEVQLDYELKENAEIRSAKEALSQNMGNPNPPTTSTTETVPSTKNDGGKYQMPLSQLFSLNTVKRFKSVTKQTNEHMTTVPKTSQNSKAKKYYPVFDVNKIDNPIVMNKNAAAEVDVIVDPLLGKFLRPHQREGVKFMYDCLMGLARPTIENPDIDCTTKSLVLENDSDISGCLLADDMGLGKTLMSITLIWTLIRQTPFASKVSCSQSGIPLTGLCKKILVVCPVTLIGNWKREFGKWLNLSRIGVLTLSSRNSPDMDKMAVRNFLKVQRTYQVLIIGYEKLLSVSEELEKNKHLIDMLVCDEGHRLKNGASKILNTLKSLDIRRKLLLTGTPIQNDLNEFFTIIDFINPGILGSFASFKRRFIIPITRARDTANRYNEELLEKGEERSKEMIEITKRFILRRTNAILEKYLPPKTDIILFCKPYSQQILAFKDILQGARLDFGQLTFSSSLGLITLLKKVCNSPGLVGSDPYYKSHIKDTQSQDSYSRSLNSGKLRVLMTLLEGIRKGTKEKVVVVSNYTQTLDIIENLMNMAGMSHCRLDGSIPAKQRDSIVTSFNRNPAIFGFLLSAKSGGVGLNLVGASRLILFDNDWNPSVDLQAMSRIHRDGQKKPCFIYRLVTTGCIDEKILQRQLMKNSLSQKFLGDSEMRNKESSNDDLFNKEDLKDLFSVHTDTKSNTHDLICSCDGLGEEIEYPETNQQQNTVELRKRSTTTWTSALDLQKKMNEAATNDDAKKSQYIRQCLVHYKHIDPARQDELFDEVITDSFTDLKDSITFAFVKPGEICLREQ</sequence>